<reference key="1">
    <citation type="journal article" date="2005" name="Genome Res.">
        <title>Complete genome sequence of the hyperthermophilic archaeon Thermococcus kodakaraensis KOD1 and comparison with Pyrococcus genomes.</title>
        <authorList>
            <person name="Fukui T."/>
            <person name="Atomi H."/>
            <person name="Kanai T."/>
            <person name="Matsumi R."/>
            <person name="Fujiwara S."/>
            <person name="Imanaka T."/>
        </authorList>
    </citation>
    <scope>NUCLEOTIDE SEQUENCE [LARGE SCALE GENOMIC DNA]</scope>
    <source>
        <strain>ATCC BAA-918 / JCM 12380 / KOD1</strain>
    </source>
</reference>
<reference evidence="4 5 6" key="2">
    <citation type="journal article" date="2020" name="Nature">
        <title>Dynamic RNA acetylation revealed by quantitative cross-evolutionary mapping.</title>
        <authorList>
            <person name="Sas-Chen A."/>
            <person name="Thomas J.M."/>
            <person name="Matzov D."/>
            <person name="Taoka M."/>
            <person name="Nance K.D."/>
            <person name="Nir R."/>
            <person name="Bryson K.M."/>
            <person name="Shachar R."/>
            <person name="Liman G.L.S."/>
            <person name="Burkhart B.W."/>
            <person name="Gamage S.T."/>
            <person name="Nobe Y."/>
            <person name="Briney C.A."/>
            <person name="Levy M.J."/>
            <person name="Fuchs R.T."/>
            <person name="Robb G.B."/>
            <person name="Hartmann J."/>
            <person name="Sharma S."/>
            <person name="Lin Q."/>
            <person name="Florens L."/>
            <person name="Washburn M.P."/>
            <person name="Isobe T."/>
            <person name="Santangelo T.J."/>
            <person name="Shalev-Benami M."/>
            <person name="Meier J.L."/>
            <person name="Schwartz S."/>
        </authorList>
    </citation>
    <scope>STRUCTURE BY ELECTRON MICROSCOPY (2.55 ANGSTROMS) IN 70S RIBOSOME IN COMPLEX WITH ZN(2+)</scope>
    <scope>SUBUNIT</scope>
    <source>
        <strain>ATCC BAA-918 / TS559</strain>
    </source>
</reference>
<organism>
    <name type="scientific">Thermococcus kodakarensis (strain ATCC BAA-918 / JCM 12380 / KOD1)</name>
    <name type="common">Pyrococcus kodakaraensis (strain KOD1)</name>
    <dbReference type="NCBI Taxonomy" id="69014"/>
    <lineage>
        <taxon>Archaea</taxon>
        <taxon>Methanobacteriati</taxon>
        <taxon>Methanobacteriota</taxon>
        <taxon>Thermococci</taxon>
        <taxon>Thermococcales</taxon>
        <taxon>Thermococcaceae</taxon>
        <taxon>Thermococcus</taxon>
    </lineage>
</organism>
<feature type="chain" id="PRO_0000149080" description="Small ribosomal subunit protein eS27">
    <location>
        <begin position="1"/>
        <end position="65"/>
    </location>
</feature>
<feature type="zinc finger region" description="C4-type" evidence="1">
    <location>
        <begin position="20"/>
        <end position="42"/>
    </location>
</feature>
<feature type="binding site" evidence="1 4 5 6">
    <location>
        <position position="20"/>
    </location>
    <ligand>
        <name>Zn(2+)</name>
        <dbReference type="ChEBI" id="CHEBI:29105"/>
    </ligand>
</feature>
<feature type="binding site" evidence="1 4 5 6">
    <location>
        <position position="23"/>
    </location>
    <ligand>
        <name>Zn(2+)</name>
        <dbReference type="ChEBI" id="CHEBI:29105"/>
    </ligand>
</feature>
<feature type="binding site" evidence="1 4 5 6">
    <location>
        <position position="39"/>
    </location>
    <ligand>
        <name>Zn(2+)</name>
        <dbReference type="ChEBI" id="CHEBI:29105"/>
    </ligand>
</feature>
<feature type="binding site" evidence="1 4 5 6">
    <location>
        <position position="42"/>
    </location>
    <ligand>
        <name>Zn(2+)</name>
        <dbReference type="ChEBI" id="CHEBI:29105"/>
    </ligand>
</feature>
<dbReference type="EMBL" id="AP006878">
    <property type="protein sequence ID" value="BAD85288.1"/>
    <property type="molecule type" value="Genomic_DNA"/>
</dbReference>
<dbReference type="RefSeq" id="WP_011250050.1">
    <property type="nucleotide sequence ID" value="NC_006624.1"/>
</dbReference>
<dbReference type="PDB" id="6SKF">
    <property type="method" value="EM"/>
    <property type="resolution" value="2.95 A"/>
    <property type="chains" value="Ax=1-65"/>
</dbReference>
<dbReference type="PDB" id="6SKG">
    <property type="method" value="EM"/>
    <property type="resolution" value="2.65 A"/>
    <property type="chains" value="Ax=1-65"/>
</dbReference>
<dbReference type="PDB" id="6TH6">
    <property type="method" value="EM"/>
    <property type="resolution" value="2.55 A"/>
    <property type="chains" value="Ax=1-65"/>
</dbReference>
<dbReference type="PDBsum" id="6SKF"/>
<dbReference type="PDBsum" id="6SKG"/>
<dbReference type="PDBsum" id="6TH6"/>
<dbReference type="EMDB" id="EMD-10223"/>
<dbReference type="EMDB" id="EMD-10224"/>
<dbReference type="EMDB" id="EMD-10503"/>
<dbReference type="SMR" id="Q5JE50"/>
<dbReference type="FunCoup" id="Q5JE50">
    <property type="interactions" value="119"/>
</dbReference>
<dbReference type="IntAct" id="Q5JE50">
    <property type="interactions" value="1"/>
</dbReference>
<dbReference type="MINT" id="Q5JE50"/>
<dbReference type="STRING" id="69014.TK1099"/>
<dbReference type="EnsemblBacteria" id="BAD85288">
    <property type="protein sequence ID" value="BAD85288"/>
    <property type="gene ID" value="TK1099"/>
</dbReference>
<dbReference type="GeneID" id="78447612"/>
<dbReference type="KEGG" id="tko:TK1099"/>
<dbReference type="PATRIC" id="fig|69014.16.peg.1075"/>
<dbReference type="eggNOG" id="arCOG04108">
    <property type="taxonomic scope" value="Archaea"/>
</dbReference>
<dbReference type="HOGENOM" id="CLU_199465_0_0_2"/>
<dbReference type="InParanoid" id="Q5JE50"/>
<dbReference type="OrthoDB" id="5718at2157"/>
<dbReference type="PhylomeDB" id="Q5JE50"/>
<dbReference type="Proteomes" id="UP000000536">
    <property type="component" value="Chromosome"/>
</dbReference>
<dbReference type="GO" id="GO:0022627">
    <property type="term" value="C:cytosolic small ribosomal subunit"/>
    <property type="evidence" value="ECO:0000318"/>
    <property type="project" value="GO_Central"/>
</dbReference>
<dbReference type="GO" id="GO:0003723">
    <property type="term" value="F:RNA binding"/>
    <property type="evidence" value="ECO:0000318"/>
    <property type="project" value="GO_Central"/>
</dbReference>
<dbReference type="GO" id="GO:0003735">
    <property type="term" value="F:structural constituent of ribosome"/>
    <property type="evidence" value="ECO:0000318"/>
    <property type="project" value="GO_Central"/>
</dbReference>
<dbReference type="GO" id="GO:0008270">
    <property type="term" value="F:zinc ion binding"/>
    <property type="evidence" value="ECO:0007669"/>
    <property type="project" value="UniProtKB-UniRule"/>
</dbReference>
<dbReference type="GO" id="GO:0000028">
    <property type="term" value="P:ribosomal small subunit assembly"/>
    <property type="evidence" value="ECO:0000318"/>
    <property type="project" value="GO_Central"/>
</dbReference>
<dbReference type="GO" id="GO:0006412">
    <property type="term" value="P:translation"/>
    <property type="evidence" value="ECO:0007669"/>
    <property type="project" value="UniProtKB-UniRule"/>
</dbReference>
<dbReference type="FunFam" id="2.20.25.100:FF:000002">
    <property type="entry name" value="30S ribosomal protein S27e"/>
    <property type="match status" value="1"/>
</dbReference>
<dbReference type="Gene3D" id="2.20.25.100">
    <property type="entry name" value="Zn-binding ribosomal proteins"/>
    <property type="match status" value="1"/>
</dbReference>
<dbReference type="HAMAP" id="MF_00371">
    <property type="entry name" value="Ribosomal_eS27"/>
    <property type="match status" value="1"/>
</dbReference>
<dbReference type="InterPro" id="IPR000592">
    <property type="entry name" value="Ribosomal_eS27"/>
</dbReference>
<dbReference type="InterPro" id="IPR023407">
    <property type="entry name" value="Ribosomal_eS27_Zn-bd_dom_sf"/>
</dbReference>
<dbReference type="InterPro" id="IPR011332">
    <property type="entry name" value="Ribosomal_zn-bd"/>
</dbReference>
<dbReference type="NCBIfam" id="NF001629">
    <property type="entry name" value="PRK00415.1"/>
    <property type="match status" value="1"/>
</dbReference>
<dbReference type="PANTHER" id="PTHR11594">
    <property type="entry name" value="40S RIBOSOMAL PROTEIN S27"/>
    <property type="match status" value="1"/>
</dbReference>
<dbReference type="Pfam" id="PF01667">
    <property type="entry name" value="Ribosomal_S27e"/>
    <property type="match status" value="1"/>
</dbReference>
<dbReference type="SUPFAM" id="SSF57829">
    <property type="entry name" value="Zn-binding ribosomal proteins"/>
    <property type="match status" value="1"/>
</dbReference>
<dbReference type="PROSITE" id="PS01168">
    <property type="entry name" value="RIBOSOMAL_S27E"/>
    <property type="match status" value="1"/>
</dbReference>
<keyword id="KW-0002">3D-structure</keyword>
<keyword id="KW-0479">Metal-binding</keyword>
<keyword id="KW-1185">Reference proteome</keyword>
<keyword id="KW-0687">Ribonucleoprotein</keyword>
<keyword id="KW-0689">Ribosomal protein</keyword>
<keyword id="KW-0862">Zinc</keyword>
<keyword id="KW-0863">Zinc-finger</keyword>
<sequence length="65" mass="7060">MALPKNLIPMPRSRFLRVKCIDCGNEQIVFSHPATPVRCLVCGATLVEPTGGKGIIKAKVLEVLE</sequence>
<accession>Q5JE50</accession>
<name>RS27_THEKO</name>
<comment type="cofactor">
    <cofactor evidence="1 4 5 6">
        <name>Zn(2+)</name>
        <dbReference type="ChEBI" id="CHEBI:29105"/>
    </cofactor>
    <text evidence="1 4 5 6">Binds 1 zinc ion per subunit.</text>
</comment>
<comment type="subunit">
    <text evidence="1 2">Part of the 30S ribosomal subunit.</text>
</comment>
<comment type="similarity">
    <text evidence="1">Belongs to the eukaryotic ribosomal protein eS27 family.</text>
</comment>
<protein>
    <recommendedName>
        <fullName evidence="1">Small ribosomal subunit protein eS27</fullName>
    </recommendedName>
    <alternativeName>
        <fullName evidence="3">30S ribosomal protein S27e</fullName>
    </alternativeName>
</protein>
<gene>
    <name evidence="1" type="primary">rps27e</name>
    <name type="ordered locus">TK1099</name>
</gene>
<proteinExistence type="evidence at protein level"/>
<evidence type="ECO:0000255" key="1">
    <source>
        <dbReference type="HAMAP-Rule" id="MF_00371"/>
    </source>
</evidence>
<evidence type="ECO:0000269" key="2">
    <source>
    </source>
</evidence>
<evidence type="ECO:0000305" key="3"/>
<evidence type="ECO:0007744" key="4">
    <source>
        <dbReference type="PDB" id="6SKF"/>
    </source>
</evidence>
<evidence type="ECO:0007744" key="5">
    <source>
        <dbReference type="PDB" id="6SKG"/>
    </source>
</evidence>
<evidence type="ECO:0007744" key="6">
    <source>
        <dbReference type="PDB" id="6TH6"/>
    </source>
</evidence>